<evidence type="ECO:0000255" key="1">
    <source>
        <dbReference type="HAMAP-Rule" id="MF_00405"/>
    </source>
</evidence>
<reference key="1">
    <citation type="journal article" date="2011" name="J. Bacteriol.">
        <title>Genome of Ochrobactrum anthropi ATCC 49188 T, a versatile opportunistic pathogen and symbiont of several eukaryotic hosts.</title>
        <authorList>
            <person name="Chain P.S."/>
            <person name="Lang D.M."/>
            <person name="Comerci D.J."/>
            <person name="Malfatti S.A."/>
            <person name="Vergez L.M."/>
            <person name="Shin M."/>
            <person name="Ugalde R.A."/>
            <person name="Garcia E."/>
            <person name="Tolmasky M.E."/>
        </authorList>
    </citation>
    <scope>NUCLEOTIDE SEQUENCE [LARGE SCALE GENOMIC DNA]</scope>
    <source>
        <strain>ATCC 49188 / DSM 6882 / CCUG 24695 / JCM 21032 / LMG 3331 / NBRC 15819 / NCTC 12168 / Alc 37</strain>
    </source>
</reference>
<feature type="chain" id="PRO_1000049827" description="3-hydroxydecanoyl-[acyl-carrier-protein] dehydratase">
    <location>
        <begin position="1"/>
        <end position="172"/>
    </location>
</feature>
<feature type="active site" evidence="1">
    <location>
        <position position="71"/>
    </location>
</feature>
<proteinExistence type="inferred from homology"/>
<comment type="function">
    <text evidence="1">Necessary for the introduction of cis unsaturation into fatty acids. Catalyzes the dehydration of (3R)-3-hydroxydecanoyl-ACP to E-(2)-decenoyl-ACP and then its isomerization to Z-(3)-decenoyl-ACP. Can catalyze the dehydratase reaction for beta-hydroxyacyl-ACPs with saturated chain lengths up to 16:0, being most active on intermediate chain length.</text>
</comment>
<comment type="catalytic activity">
    <reaction evidence="1">
        <text>a (3R)-hydroxyacyl-[ACP] = a (2E)-enoyl-[ACP] + H2O</text>
        <dbReference type="Rhea" id="RHEA:13097"/>
        <dbReference type="Rhea" id="RHEA-COMP:9925"/>
        <dbReference type="Rhea" id="RHEA-COMP:9945"/>
        <dbReference type="ChEBI" id="CHEBI:15377"/>
        <dbReference type="ChEBI" id="CHEBI:78784"/>
        <dbReference type="ChEBI" id="CHEBI:78827"/>
        <dbReference type="EC" id="4.2.1.59"/>
    </reaction>
</comment>
<comment type="catalytic activity">
    <reaction evidence="1">
        <text>(3R)-hydroxydecanoyl-[ACP] = (2E)-decenoyl-[ACP] + H2O</text>
        <dbReference type="Rhea" id="RHEA:41860"/>
        <dbReference type="Rhea" id="RHEA-COMP:9638"/>
        <dbReference type="Rhea" id="RHEA-COMP:9639"/>
        <dbReference type="ChEBI" id="CHEBI:15377"/>
        <dbReference type="ChEBI" id="CHEBI:78466"/>
        <dbReference type="ChEBI" id="CHEBI:78467"/>
    </reaction>
</comment>
<comment type="catalytic activity">
    <reaction evidence="1">
        <text>(2E)-decenoyl-[ACP] = (3Z)-decenoyl-[ACP]</text>
        <dbReference type="Rhea" id="RHEA:23568"/>
        <dbReference type="Rhea" id="RHEA-COMP:9639"/>
        <dbReference type="Rhea" id="RHEA-COMP:9927"/>
        <dbReference type="ChEBI" id="CHEBI:78467"/>
        <dbReference type="ChEBI" id="CHEBI:78798"/>
        <dbReference type="EC" id="5.3.3.14"/>
    </reaction>
</comment>
<comment type="pathway">
    <text evidence="1">Lipid metabolism; fatty acid biosynthesis.</text>
</comment>
<comment type="subunit">
    <text evidence="1">Homodimer.</text>
</comment>
<comment type="subcellular location">
    <subcellularLocation>
        <location evidence="1">Cytoplasm</location>
    </subcellularLocation>
</comment>
<comment type="similarity">
    <text evidence="1">Belongs to the thioester dehydratase family. FabA subfamily.</text>
</comment>
<organism>
    <name type="scientific">Brucella anthropi (strain ATCC 49188 / DSM 6882 / CCUG 24695 / JCM 21032 / LMG 3331 / NBRC 15819 / NCTC 12168 / Alc 37)</name>
    <name type="common">Ochrobactrum anthropi</name>
    <dbReference type="NCBI Taxonomy" id="439375"/>
    <lineage>
        <taxon>Bacteria</taxon>
        <taxon>Pseudomonadati</taxon>
        <taxon>Pseudomonadota</taxon>
        <taxon>Alphaproteobacteria</taxon>
        <taxon>Hyphomicrobiales</taxon>
        <taxon>Brucellaceae</taxon>
        <taxon>Brucella/Ochrobactrum group</taxon>
        <taxon>Brucella</taxon>
    </lineage>
</organism>
<keyword id="KW-0963">Cytoplasm</keyword>
<keyword id="KW-0275">Fatty acid biosynthesis</keyword>
<keyword id="KW-0276">Fatty acid metabolism</keyword>
<keyword id="KW-0413">Isomerase</keyword>
<keyword id="KW-0444">Lipid biosynthesis</keyword>
<keyword id="KW-0443">Lipid metabolism</keyword>
<keyword id="KW-0456">Lyase</keyword>
<keyword id="KW-1185">Reference proteome</keyword>
<sequence>MAEQKSSYGYEELLACARGEMFGPGNAQLPLPPMLMVHRITDISETGGEFDKGYIRAEYDVRPDDWYFPCHFMGNPIMPGCLGLDGMWQLTGFFLGWLGEPGRGMALSTGEVKFKGMVRPHTKLLEYGIDFKRVMRGRLVLGTADGWLKADGETIYRASDLRVGLSKDSEGQ</sequence>
<name>FABA_BRUA4</name>
<accession>A6WWV7</accession>
<protein>
    <recommendedName>
        <fullName evidence="1">3-hydroxydecanoyl-[acyl-carrier-protein] dehydratase</fullName>
        <ecNumber evidence="1">4.2.1.59</ecNumber>
    </recommendedName>
    <alternativeName>
        <fullName evidence="1">3-hydroxyacyl-[acyl-carrier-protein] dehydratase FabA</fullName>
    </alternativeName>
    <alternativeName>
        <fullName evidence="1">Beta-hydroxydecanoyl thioester dehydrase</fullName>
    </alternativeName>
    <alternativeName>
        <fullName evidence="1">Trans-2-decenoyl-[acyl-carrier-protein] isomerase</fullName>
        <ecNumber evidence="1">5.3.3.14</ecNumber>
    </alternativeName>
</protein>
<gene>
    <name evidence="1" type="primary">fabA</name>
    <name type="ordered locus">Oant_0739</name>
</gene>
<dbReference type="EC" id="4.2.1.59" evidence="1"/>
<dbReference type="EC" id="5.3.3.14" evidence="1"/>
<dbReference type="EMBL" id="CP000758">
    <property type="protein sequence ID" value="ABS13461.1"/>
    <property type="molecule type" value="Genomic_DNA"/>
</dbReference>
<dbReference type="RefSeq" id="WP_010657784.1">
    <property type="nucleotide sequence ID" value="NC_009667.1"/>
</dbReference>
<dbReference type="SMR" id="A6WWV7"/>
<dbReference type="STRING" id="439375.Oant_0739"/>
<dbReference type="GeneID" id="61318813"/>
<dbReference type="KEGG" id="oan:Oant_0739"/>
<dbReference type="eggNOG" id="COG0764">
    <property type="taxonomic scope" value="Bacteria"/>
</dbReference>
<dbReference type="HOGENOM" id="CLU_097925_0_0_5"/>
<dbReference type="PhylomeDB" id="A6WWV7"/>
<dbReference type="UniPathway" id="UPA00094"/>
<dbReference type="Proteomes" id="UP000002301">
    <property type="component" value="Chromosome 1"/>
</dbReference>
<dbReference type="GO" id="GO:0005737">
    <property type="term" value="C:cytoplasm"/>
    <property type="evidence" value="ECO:0007669"/>
    <property type="project" value="UniProtKB-SubCell"/>
</dbReference>
<dbReference type="GO" id="GO:0019171">
    <property type="term" value="F:(3R)-hydroxyacyl-[acyl-carrier-protein] dehydratase activity"/>
    <property type="evidence" value="ECO:0007669"/>
    <property type="project" value="UniProtKB-UniRule"/>
</dbReference>
<dbReference type="GO" id="GO:0034017">
    <property type="term" value="F:trans-2-decenoyl-acyl-carrier-protein isomerase activity"/>
    <property type="evidence" value="ECO:0007669"/>
    <property type="project" value="UniProtKB-UniRule"/>
</dbReference>
<dbReference type="GO" id="GO:0006636">
    <property type="term" value="P:unsaturated fatty acid biosynthetic process"/>
    <property type="evidence" value="ECO:0007669"/>
    <property type="project" value="UniProtKB-UniRule"/>
</dbReference>
<dbReference type="CDD" id="cd01287">
    <property type="entry name" value="FabA"/>
    <property type="match status" value="1"/>
</dbReference>
<dbReference type="Gene3D" id="3.10.129.10">
    <property type="entry name" value="Hotdog Thioesterase"/>
    <property type="match status" value="1"/>
</dbReference>
<dbReference type="HAMAP" id="MF_00405">
    <property type="entry name" value="FabA"/>
    <property type="match status" value="1"/>
</dbReference>
<dbReference type="InterPro" id="IPR010083">
    <property type="entry name" value="FabA"/>
</dbReference>
<dbReference type="InterPro" id="IPR013114">
    <property type="entry name" value="FabA_FabZ"/>
</dbReference>
<dbReference type="InterPro" id="IPR029069">
    <property type="entry name" value="HotDog_dom_sf"/>
</dbReference>
<dbReference type="NCBIfam" id="TIGR01749">
    <property type="entry name" value="fabA"/>
    <property type="match status" value="1"/>
</dbReference>
<dbReference type="NCBIfam" id="NF003509">
    <property type="entry name" value="PRK05174.1"/>
    <property type="match status" value="1"/>
</dbReference>
<dbReference type="PANTHER" id="PTHR30272">
    <property type="entry name" value="3-HYDROXYACYL-[ACYL-CARRIER-PROTEIN] DEHYDRATASE"/>
    <property type="match status" value="1"/>
</dbReference>
<dbReference type="PANTHER" id="PTHR30272:SF8">
    <property type="entry name" value="3-HYDROXYDECANOYL-[ACYL-CARRIER-PROTEIN] DEHYDRATASE"/>
    <property type="match status" value="1"/>
</dbReference>
<dbReference type="Pfam" id="PF07977">
    <property type="entry name" value="FabA"/>
    <property type="match status" value="1"/>
</dbReference>
<dbReference type="SUPFAM" id="SSF54637">
    <property type="entry name" value="Thioesterase/thiol ester dehydrase-isomerase"/>
    <property type="match status" value="1"/>
</dbReference>